<feature type="chain" id="PRO_0000209362" description="Sugar efflux transporter C">
    <location>
        <begin position="1"/>
        <end position="394"/>
    </location>
</feature>
<feature type="topological domain" description="Periplasmic" evidence="1">
    <location>
        <begin position="1"/>
        <end position="10"/>
    </location>
</feature>
<feature type="transmembrane region" description="Helical" evidence="1">
    <location>
        <begin position="11"/>
        <end position="31"/>
    </location>
</feature>
<feature type="topological domain" description="Cytoplasmic" evidence="1">
    <location>
        <begin position="32"/>
        <end position="49"/>
    </location>
</feature>
<feature type="transmembrane region" description="Helical" evidence="1">
    <location>
        <begin position="50"/>
        <end position="70"/>
    </location>
</feature>
<feature type="topological domain" description="Periplasmic" evidence="1">
    <location>
        <begin position="71"/>
        <end position="80"/>
    </location>
</feature>
<feature type="transmembrane region" description="Helical" evidence="1">
    <location>
        <begin position="81"/>
        <end position="101"/>
    </location>
</feature>
<feature type="topological domain" description="Cytoplasmic" evidence="1">
    <location>
        <begin position="102"/>
        <end position="104"/>
    </location>
</feature>
<feature type="transmembrane region" description="Helical" evidence="1">
    <location>
        <begin position="105"/>
        <end position="125"/>
    </location>
</feature>
<feature type="topological domain" description="Periplasmic" evidence="1">
    <location>
        <begin position="126"/>
        <end position="150"/>
    </location>
</feature>
<feature type="transmembrane region" description="Helical" evidence="1">
    <location>
        <begin position="151"/>
        <end position="171"/>
    </location>
</feature>
<feature type="topological domain" description="Cytoplasmic" evidence="1">
    <location>
        <position position="172"/>
    </location>
</feature>
<feature type="transmembrane region" description="Helical" evidence="1">
    <location>
        <begin position="173"/>
        <end position="193"/>
    </location>
</feature>
<feature type="topological domain" description="Periplasmic" evidence="1">
    <location>
        <begin position="194"/>
        <end position="224"/>
    </location>
</feature>
<feature type="transmembrane region" description="Helical" evidence="1">
    <location>
        <begin position="225"/>
        <end position="245"/>
    </location>
</feature>
<feature type="topological domain" description="Cytoplasmic" evidence="1">
    <location>
        <begin position="246"/>
        <end position="253"/>
    </location>
</feature>
<feature type="transmembrane region" description="Helical" evidence="1">
    <location>
        <begin position="254"/>
        <end position="274"/>
    </location>
</feature>
<feature type="topological domain" description="Periplasmic" evidence="1">
    <location>
        <begin position="275"/>
        <end position="283"/>
    </location>
</feature>
<feature type="transmembrane region" description="Helical" evidence="1">
    <location>
        <begin position="284"/>
        <end position="304"/>
    </location>
</feature>
<feature type="topological domain" description="Cytoplasmic" evidence="1">
    <location>
        <begin position="305"/>
        <end position="310"/>
    </location>
</feature>
<feature type="transmembrane region" description="Helical" evidence="1">
    <location>
        <begin position="311"/>
        <end position="331"/>
    </location>
</feature>
<feature type="topological domain" description="Periplasmic" evidence="1">
    <location>
        <begin position="332"/>
        <end position="370"/>
    </location>
</feature>
<feature type="transmembrane region" description="Helical" evidence="1">
    <location>
        <begin position="371"/>
        <end position="391"/>
    </location>
</feature>
<feature type="topological domain" description="Cytoplasmic" evidence="1">
    <location>
        <begin position="392"/>
        <end position="394"/>
    </location>
</feature>
<sequence length="394" mass="43493">MQKTATTPSKILDLTAAAFLLVAFLTGIAGALQTPTLSIFLADELKARPIMVGFFFTGSAIMGILVSQFLARHSDKQGDRKLLILLCCLFGVLACTLFAWNRNYFILLSTGVLLSSFASTANPQMFALAREHADRTGRETVMFSTFLRAQISLAWVIGPPLAYELAMGFSFKVMYLTAAIAFVVCGLIVWLFLPSIQRNIPVVTQPVEILPSTHRKRDTRLLFVVCSMMWAANNLYMINMPLFIIDELHLTDKLTGEMIGIAAGLEIPMMLIAGYYMKRIGKRLLMLIAIVSGMCFYASVLMATTPAVELELQILNAIFLGILCGIGMLYFQDLMPEKIGSATTLYANTSRVGWIIAGSVDGIMVEIWSYHALFWLAIGMLGIAMICLLFIKDI</sequence>
<name>SETC_ECOLI</name>
<dbReference type="EMBL" id="L10328">
    <property type="protein sequence ID" value="AAA62011.1"/>
    <property type="molecule type" value="Genomic_DNA"/>
</dbReference>
<dbReference type="EMBL" id="U00096">
    <property type="protein sequence ID" value="AAC76682.1"/>
    <property type="molecule type" value="Genomic_DNA"/>
</dbReference>
<dbReference type="EMBL" id="AP009048">
    <property type="protein sequence ID" value="BAE77635.1"/>
    <property type="molecule type" value="Genomic_DNA"/>
</dbReference>
<dbReference type="PIR" id="D65167">
    <property type="entry name" value="D65167"/>
</dbReference>
<dbReference type="RefSeq" id="NP_418115.1">
    <property type="nucleotide sequence ID" value="NC_000913.3"/>
</dbReference>
<dbReference type="RefSeq" id="WP_001172878.1">
    <property type="nucleotide sequence ID" value="NZ_LN832404.1"/>
</dbReference>
<dbReference type="SMR" id="P31436"/>
<dbReference type="BioGRID" id="4259628">
    <property type="interactions" value="13"/>
</dbReference>
<dbReference type="FunCoup" id="P31436">
    <property type="interactions" value="115"/>
</dbReference>
<dbReference type="STRING" id="511145.b3659"/>
<dbReference type="TCDB" id="2.A.1.20.3">
    <property type="family name" value="the major facilitator superfamily (mfs)"/>
</dbReference>
<dbReference type="PaxDb" id="511145-b3659"/>
<dbReference type="EnsemblBacteria" id="AAC76682">
    <property type="protein sequence ID" value="AAC76682"/>
    <property type="gene ID" value="b3659"/>
</dbReference>
<dbReference type="GeneID" id="948177"/>
<dbReference type="KEGG" id="ecj:JW3633"/>
<dbReference type="KEGG" id="eco:b3659"/>
<dbReference type="KEGG" id="ecoc:C3026_19825"/>
<dbReference type="PATRIC" id="fig|1411691.4.peg.3047"/>
<dbReference type="EchoBASE" id="EB1638"/>
<dbReference type="eggNOG" id="COG2814">
    <property type="taxonomic scope" value="Bacteria"/>
</dbReference>
<dbReference type="HOGENOM" id="CLU_055598_3_0_6"/>
<dbReference type="InParanoid" id="P31436"/>
<dbReference type="OMA" id="ERWHIYA"/>
<dbReference type="OrthoDB" id="7337792at2"/>
<dbReference type="PhylomeDB" id="P31436"/>
<dbReference type="BioCyc" id="EcoCyc:B3659-MONOMER"/>
<dbReference type="PRO" id="PR:P31436"/>
<dbReference type="Proteomes" id="UP000000625">
    <property type="component" value="Chromosome"/>
</dbReference>
<dbReference type="GO" id="GO:0005886">
    <property type="term" value="C:plasma membrane"/>
    <property type="evidence" value="ECO:0000314"/>
    <property type="project" value="EcoCyc"/>
</dbReference>
<dbReference type="GO" id="GO:0005351">
    <property type="term" value="F:carbohydrate:proton symporter activity"/>
    <property type="evidence" value="ECO:0000318"/>
    <property type="project" value="GO_Central"/>
</dbReference>
<dbReference type="GO" id="GO:0036448">
    <property type="term" value="P:cellular response to glucose-phosphate stress"/>
    <property type="evidence" value="ECO:0000318"/>
    <property type="project" value="GO_Central"/>
</dbReference>
<dbReference type="GO" id="GO:1904659">
    <property type="term" value="P:D-glucose transmembrane transport"/>
    <property type="evidence" value="ECO:0000318"/>
    <property type="project" value="GO_Central"/>
</dbReference>
<dbReference type="GO" id="GO:0015767">
    <property type="term" value="P:lactose transport"/>
    <property type="evidence" value="ECO:0000318"/>
    <property type="project" value="GO_Central"/>
</dbReference>
<dbReference type="CDD" id="cd17471">
    <property type="entry name" value="MFS_Set"/>
    <property type="match status" value="1"/>
</dbReference>
<dbReference type="FunFam" id="1.20.1250.20:FF:000125">
    <property type="entry name" value="Sugar efflux transporter SetB"/>
    <property type="match status" value="1"/>
</dbReference>
<dbReference type="FunFam" id="1.20.1250.20:FF:000151">
    <property type="entry name" value="Sugar efflux transporter SetB"/>
    <property type="match status" value="1"/>
</dbReference>
<dbReference type="Gene3D" id="1.20.1250.20">
    <property type="entry name" value="MFS general substrate transporter like domains"/>
    <property type="match status" value="2"/>
</dbReference>
<dbReference type="InterPro" id="IPR011701">
    <property type="entry name" value="MFS"/>
</dbReference>
<dbReference type="InterPro" id="IPR020846">
    <property type="entry name" value="MFS_dom"/>
</dbReference>
<dbReference type="InterPro" id="IPR036259">
    <property type="entry name" value="MFS_trans_sf"/>
</dbReference>
<dbReference type="InterPro" id="IPR004750">
    <property type="entry name" value="Sugar_efflux"/>
</dbReference>
<dbReference type="NCBIfam" id="TIGR00899">
    <property type="entry name" value="2A0120"/>
    <property type="match status" value="1"/>
</dbReference>
<dbReference type="PANTHER" id="PTHR23535">
    <property type="entry name" value="SUGAR EFFLUX TRANSPORTER A-RELATED"/>
    <property type="match status" value="1"/>
</dbReference>
<dbReference type="PANTHER" id="PTHR23535:SF2">
    <property type="entry name" value="SUGAR EFFLUX TRANSPORTER A-RELATED"/>
    <property type="match status" value="1"/>
</dbReference>
<dbReference type="Pfam" id="PF07690">
    <property type="entry name" value="MFS_1"/>
    <property type="match status" value="1"/>
</dbReference>
<dbReference type="SUPFAM" id="SSF103473">
    <property type="entry name" value="MFS general substrate transporter"/>
    <property type="match status" value="1"/>
</dbReference>
<dbReference type="PROSITE" id="PS50850">
    <property type="entry name" value="MFS"/>
    <property type="match status" value="1"/>
</dbReference>
<gene>
    <name type="primary">setC</name>
    <name type="synonym">yicK</name>
    <name type="ordered locus">b3659</name>
    <name type="ordered locus">JW3633</name>
</gene>
<comment type="function">
    <text>Involved in the efflux of sugars. The physiological role may be the detoxification of non-metabolizable sugar analogs.</text>
</comment>
<comment type="subcellular location">
    <subcellularLocation>
        <location>Cell inner membrane</location>
        <topology>Multi-pass membrane protein</topology>
    </subcellularLocation>
</comment>
<comment type="similarity">
    <text evidence="2">Belongs to the major facilitator superfamily. Set transporter family.</text>
</comment>
<keyword id="KW-0997">Cell inner membrane</keyword>
<keyword id="KW-1003">Cell membrane</keyword>
<keyword id="KW-0472">Membrane</keyword>
<keyword id="KW-1185">Reference proteome</keyword>
<keyword id="KW-0762">Sugar transport</keyword>
<keyword id="KW-0812">Transmembrane</keyword>
<keyword id="KW-1133">Transmembrane helix</keyword>
<keyword id="KW-0813">Transport</keyword>
<accession>P31436</accession>
<accession>Q2M7X1</accession>
<reference key="1">
    <citation type="journal article" date="1993" name="Genomics">
        <title>DNA sequence and analysis of 136 kilobases of the Escherichia coli genome: organizational symmetry around the origin of replication.</title>
        <authorList>
            <person name="Burland V.D."/>
            <person name="Plunkett G. III"/>
            <person name="Daniels D.L."/>
            <person name="Blattner F.R."/>
        </authorList>
    </citation>
    <scope>NUCLEOTIDE SEQUENCE [LARGE SCALE GENOMIC DNA]</scope>
    <source>
        <strain>K12 / MG1655 / ATCC 47076</strain>
    </source>
</reference>
<reference key="2">
    <citation type="journal article" date="1997" name="Science">
        <title>The complete genome sequence of Escherichia coli K-12.</title>
        <authorList>
            <person name="Blattner F.R."/>
            <person name="Plunkett G. III"/>
            <person name="Bloch C.A."/>
            <person name="Perna N.T."/>
            <person name="Burland V."/>
            <person name="Riley M."/>
            <person name="Collado-Vides J."/>
            <person name="Glasner J.D."/>
            <person name="Rode C.K."/>
            <person name="Mayhew G.F."/>
            <person name="Gregor J."/>
            <person name="Davis N.W."/>
            <person name="Kirkpatrick H.A."/>
            <person name="Goeden M.A."/>
            <person name="Rose D.J."/>
            <person name="Mau B."/>
            <person name="Shao Y."/>
        </authorList>
    </citation>
    <scope>NUCLEOTIDE SEQUENCE [LARGE SCALE GENOMIC DNA]</scope>
    <source>
        <strain>K12 / MG1655 / ATCC 47076</strain>
    </source>
</reference>
<reference key="3">
    <citation type="journal article" date="2006" name="Mol. Syst. Biol.">
        <title>Highly accurate genome sequences of Escherichia coli K-12 strains MG1655 and W3110.</title>
        <authorList>
            <person name="Hayashi K."/>
            <person name="Morooka N."/>
            <person name="Yamamoto Y."/>
            <person name="Fujita K."/>
            <person name="Isono K."/>
            <person name="Choi S."/>
            <person name="Ohtsubo E."/>
            <person name="Baba T."/>
            <person name="Wanner B.L."/>
            <person name="Mori H."/>
            <person name="Horiuchi T."/>
        </authorList>
    </citation>
    <scope>NUCLEOTIDE SEQUENCE [LARGE SCALE GENOMIC DNA]</scope>
    <source>
        <strain>K12 / W3110 / ATCC 27325 / DSM 5911</strain>
    </source>
</reference>
<reference key="4">
    <citation type="journal article" date="1999" name="Mol. Microbiol.">
        <title>The identification of a new family of sugar efflux pumps in Escherichia coli.</title>
        <authorList>
            <person name="Liu J.Y."/>
            <person name="Miller P.F."/>
            <person name="Gosink M."/>
            <person name="Olson E.R."/>
        </authorList>
    </citation>
    <scope>CHARACTERIZATION</scope>
</reference>
<reference key="5">
    <citation type="journal article" date="1999" name="J. Biol. Chem.">
        <title>Functional and biochemical characterization of Escherichia coli sugar efflux transporters.</title>
        <authorList>
            <person name="Liu J.Y."/>
            <person name="Miller P.F."/>
            <person name="Willard J."/>
            <person name="Olson E.R."/>
        </authorList>
    </citation>
    <scope>CHARACTERIZATION</scope>
</reference>
<reference key="6">
    <citation type="journal article" date="2005" name="Science">
        <title>Global topology analysis of the Escherichia coli inner membrane proteome.</title>
        <authorList>
            <person name="Daley D.O."/>
            <person name="Rapp M."/>
            <person name="Granseth E."/>
            <person name="Melen K."/>
            <person name="Drew D."/>
            <person name="von Heijne G."/>
        </authorList>
    </citation>
    <scope>TOPOLOGY [LARGE SCALE ANALYSIS]</scope>
    <source>
        <strain>K12 / MG1655 / ATCC 47076</strain>
    </source>
</reference>
<protein>
    <recommendedName>
        <fullName>Sugar efflux transporter C</fullName>
    </recommendedName>
</protein>
<organism>
    <name type="scientific">Escherichia coli (strain K12)</name>
    <dbReference type="NCBI Taxonomy" id="83333"/>
    <lineage>
        <taxon>Bacteria</taxon>
        <taxon>Pseudomonadati</taxon>
        <taxon>Pseudomonadota</taxon>
        <taxon>Gammaproteobacteria</taxon>
        <taxon>Enterobacterales</taxon>
        <taxon>Enterobacteriaceae</taxon>
        <taxon>Escherichia</taxon>
    </lineage>
</organism>
<evidence type="ECO:0000255" key="1"/>
<evidence type="ECO:0000305" key="2"/>
<proteinExistence type="evidence at protein level"/>